<feature type="chain" id="PRO_1000076805" description="Probable endonuclease 4">
    <location>
        <begin position="1"/>
        <end position="287"/>
    </location>
</feature>
<feature type="binding site" evidence="1">
    <location>
        <position position="69"/>
    </location>
    <ligand>
        <name>Zn(2+)</name>
        <dbReference type="ChEBI" id="CHEBI:29105"/>
        <label>1</label>
    </ligand>
</feature>
<feature type="binding site" evidence="1">
    <location>
        <position position="109"/>
    </location>
    <ligand>
        <name>Zn(2+)</name>
        <dbReference type="ChEBI" id="CHEBI:29105"/>
        <label>1</label>
    </ligand>
</feature>
<feature type="binding site" evidence="1">
    <location>
        <position position="146"/>
    </location>
    <ligand>
        <name>Zn(2+)</name>
        <dbReference type="ChEBI" id="CHEBI:29105"/>
        <label>1</label>
    </ligand>
</feature>
<feature type="binding site" evidence="1">
    <location>
        <position position="146"/>
    </location>
    <ligand>
        <name>Zn(2+)</name>
        <dbReference type="ChEBI" id="CHEBI:29105"/>
        <label>2</label>
    </ligand>
</feature>
<feature type="binding site" evidence="1">
    <location>
        <position position="180"/>
    </location>
    <ligand>
        <name>Zn(2+)</name>
        <dbReference type="ChEBI" id="CHEBI:29105"/>
        <label>2</label>
    </ligand>
</feature>
<feature type="binding site" evidence="1">
    <location>
        <position position="183"/>
    </location>
    <ligand>
        <name>Zn(2+)</name>
        <dbReference type="ChEBI" id="CHEBI:29105"/>
        <label>3</label>
    </ligand>
</feature>
<feature type="binding site" evidence="1">
    <location>
        <position position="217"/>
    </location>
    <ligand>
        <name>Zn(2+)</name>
        <dbReference type="ChEBI" id="CHEBI:29105"/>
        <label>2</label>
    </ligand>
</feature>
<feature type="binding site" evidence="1">
    <location>
        <position position="230"/>
    </location>
    <ligand>
        <name>Zn(2+)</name>
        <dbReference type="ChEBI" id="CHEBI:29105"/>
        <label>3</label>
    </ligand>
</feature>
<feature type="binding site" evidence="1">
    <location>
        <position position="232"/>
    </location>
    <ligand>
        <name>Zn(2+)</name>
        <dbReference type="ChEBI" id="CHEBI:29105"/>
        <label>3</label>
    </ligand>
</feature>
<feature type="binding site" evidence="1">
    <location>
        <position position="262"/>
    </location>
    <ligand>
        <name>Zn(2+)</name>
        <dbReference type="ChEBI" id="CHEBI:29105"/>
        <label>2</label>
    </ligand>
</feature>
<protein>
    <recommendedName>
        <fullName evidence="1">Probable endonuclease 4</fullName>
        <ecNumber evidence="1">3.1.21.2</ecNumber>
    </recommendedName>
    <alternativeName>
        <fullName evidence="1">Endodeoxyribonuclease IV</fullName>
    </alternativeName>
    <alternativeName>
        <fullName evidence="1">Endonuclease IV</fullName>
    </alternativeName>
</protein>
<keyword id="KW-0227">DNA damage</keyword>
<keyword id="KW-0234">DNA repair</keyword>
<keyword id="KW-0255">Endonuclease</keyword>
<keyword id="KW-0378">Hydrolase</keyword>
<keyword id="KW-0479">Metal-binding</keyword>
<keyword id="KW-0540">Nuclease</keyword>
<keyword id="KW-0862">Zinc</keyword>
<evidence type="ECO:0000255" key="1">
    <source>
        <dbReference type="HAMAP-Rule" id="MF_00152"/>
    </source>
</evidence>
<comment type="function">
    <text evidence="1">Endonuclease IV plays a role in DNA repair. It cleaves phosphodiester bonds at apurinic or apyrimidinic (AP) sites, generating a 3'-hydroxyl group and a 5'-terminal sugar phosphate.</text>
</comment>
<comment type="catalytic activity">
    <reaction evidence="1">
        <text>Endonucleolytic cleavage to 5'-phosphooligonucleotide end-products.</text>
        <dbReference type="EC" id="3.1.21.2"/>
    </reaction>
</comment>
<comment type="cofactor">
    <cofactor evidence="1">
        <name>Zn(2+)</name>
        <dbReference type="ChEBI" id="CHEBI:29105"/>
    </cofactor>
    <text evidence="1">Binds 3 Zn(2+) ions.</text>
</comment>
<comment type="similarity">
    <text evidence="1">Belongs to the AP endonuclease 2 family.</text>
</comment>
<sequence>MIKIGAHMKISKGFTKVPPDTANIGGNTFQIFTSSPRVWKVNPPKENDVEGFKNAMTEFNINFEDVLVHSSYLINLASPKDDIREKSITAMIEEIKATDQLGILHYNFHPGSHLGEGEEFGINKILEGLDIIFKEVQNTKVTILLENVAQKGSNIGYSMEQLGRIINKSPWKERLGITYDTCHGFDSNYDIRKKEEVQRLLDEIDKYIGLNKLKMIHLNDSKYDVGAAKDRHEFIGKGYIGREGFKTFLSFDEISKLPLILETPGDDPEHSQDIKVVKEIFKELGKL</sequence>
<organism>
    <name type="scientific">Petrotoga mobilis (strain DSM 10674 / SJ95)</name>
    <dbReference type="NCBI Taxonomy" id="403833"/>
    <lineage>
        <taxon>Bacteria</taxon>
        <taxon>Thermotogati</taxon>
        <taxon>Thermotogota</taxon>
        <taxon>Thermotogae</taxon>
        <taxon>Petrotogales</taxon>
        <taxon>Petrotogaceae</taxon>
        <taxon>Petrotoga</taxon>
    </lineage>
</organism>
<reference key="1">
    <citation type="submission" date="2007-11" db="EMBL/GenBank/DDBJ databases">
        <title>Complete sequence of Petroga mobilis SJ95.</title>
        <authorList>
            <consortium name="US DOE Joint Genome Institute"/>
            <person name="Copeland A."/>
            <person name="Lucas S."/>
            <person name="Lapidus A."/>
            <person name="Barry K."/>
            <person name="Glavina del Rio T."/>
            <person name="Dalin E."/>
            <person name="Tice H."/>
            <person name="Pitluck S."/>
            <person name="Meincke L."/>
            <person name="Brettin T."/>
            <person name="Bruce D."/>
            <person name="Detter J.C."/>
            <person name="Han C."/>
            <person name="Kuske C.R."/>
            <person name="Schmutz J."/>
            <person name="Larimer F."/>
            <person name="Land M."/>
            <person name="Hauser L."/>
            <person name="Kyrpides N."/>
            <person name="Mikhailova N."/>
            <person name="Noll K."/>
            <person name="Richardson P."/>
        </authorList>
    </citation>
    <scope>NUCLEOTIDE SEQUENCE [LARGE SCALE GENOMIC DNA]</scope>
    <source>
        <strain>DSM 10674 / SJ95</strain>
    </source>
</reference>
<gene>
    <name evidence="1" type="primary">nfo</name>
    <name type="ordered locus">Pmob_1814</name>
</gene>
<dbReference type="EC" id="3.1.21.2" evidence="1"/>
<dbReference type="EMBL" id="CP000879">
    <property type="protein sequence ID" value="ABX32503.1"/>
    <property type="molecule type" value="Genomic_DNA"/>
</dbReference>
<dbReference type="RefSeq" id="WP_012209600.1">
    <property type="nucleotide sequence ID" value="NC_010003.1"/>
</dbReference>
<dbReference type="SMR" id="A9BJ15"/>
<dbReference type="STRING" id="403833.Pmob_1814"/>
<dbReference type="KEGG" id="pmo:Pmob_1814"/>
<dbReference type="eggNOG" id="COG0648">
    <property type="taxonomic scope" value="Bacteria"/>
</dbReference>
<dbReference type="HOGENOM" id="CLU_025885_0_1_0"/>
<dbReference type="OrthoDB" id="9805666at2"/>
<dbReference type="Proteomes" id="UP000000789">
    <property type="component" value="Chromosome"/>
</dbReference>
<dbReference type="GO" id="GO:0008833">
    <property type="term" value="F:deoxyribonuclease IV (phage-T4-induced) activity"/>
    <property type="evidence" value="ECO:0007669"/>
    <property type="project" value="UniProtKB-UniRule"/>
</dbReference>
<dbReference type="GO" id="GO:0003677">
    <property type="term" value="F:DNA binding"/>
    <property type="evidence" value="ECO:0007669"/>
    <property type="project" value="InterPro"/>
</dbReference>
<dbReference type="GO" id="GO:0003906">
    <property type="term" value="F:DNA-(apurinic or apyrimidinic site) endonuclease activity"/>
    <property type="evidence" value="ECO:0007669"/>
    <property type="project" value="TreeGrafter"/>
</dbReference>
<dbReference type="GO" id="GO:0008081">
    <property type="term" value="F:phosphoric diester hydrolase activity"/>
    <property type="evidence" value="ECO:0007669"/>
    <property type="project" value="TreeGrafter"/>
</dbReference>
<dbReference type="GO" id="GO:0008270">
    <property type="term" value="F:zinc ion binding"/>
    <property type="evidence" value="ECO:0007669"/>
    <property type="project" value="UniProtKB-UniRule"/>
</dbReference>
<dbReference type="GO" id="GO:0006284">
    <property type="term" value="P:base-excision repair"/>
    <property type="evidence" value="ECO:0007669"/>
    <property type="project" value="TreeGrafter"/>
</dbReference>
<dbReference type="CDD" id="cd00019">
    <property type="entry name" value="AP2Ec"/>
    <property type="match status" value="1"/>
</dbReference>
<dbReference type="FunFam" id="3.20.20.150:FF:000001">
    <property type="entry name" value="Probable endonuclease 4"/>
    <property type="match status" value="1"/>
</dbReference>
<dbReference type="Gene3D" id="3.20.20.150">
    <property type="entry name" value="Divalent-metal-dependent TIM barrel enzymes"/>
    <property type="match status" value="1"/>
</dbReference>
<dbReference type="HAMAP" id="MF_00152">
    <property type="entry name" value="Nfo"/>
    <property type="match status" value="1"/>
</dbReference>
<dbReference type="InterPro" id="IPR001719">
    <property type="entry name" value="AP_endonuc_2"/>
</dbReference>
<dbReference type="InterPro" id="IPR018246">
    <property type="entry name" value="AP_endonuc_F2_Zn_BS"/>
</dbReference>
<dbReference type="InterPro" id="IPR036237">
    <property type="entry name" value="Xyl_isomerase-like_sf"/>
</dbReference>
<dbReference type="InterPro" id="IPR013022">
    <property type="entry name" value="Xyl_isomerase-like_TIM-brl"/>
</dbReference>
<dbReference type="NCBIfam" id="TIGR00587">
    <property type="entry name" value="nfo"/>
    <property type="match status" value="1"/>
</dbReference>
<dbReference type="PANTHER" id="PTHR21445:SF0">
    <property type="entry name" value="APURINIC-APYRIMIDINIC ENDONUCLEASE"/>
    <property type="match status" value="1"/>
</dbReference>
<dbReference type="PANTHER" id="PTHR21445">
    <property type="entry name" value="ENDONUCLEASE IV ENDODEOXYRIBONUCLEASE IV"/>
    <property type="match status" value="1"/>
</dbReference>
<dbReference type="Pfam" id="PF01261">
    <property type="entry name" value="AP_endonuc_2"/>
    <property type="match status" value="1"/>
</dbReference>
<dbReference type="SMART" id="SM00518">
    <property type="entry name" value="AP2Ec"/>
    <property type="match status" value="1"/>
</dbReference>
<dbReference type="SUPFAM" id="SSF51658">
    <property type="entry name" value="Xylose isomerase-like"/>
    <property type="match status" value="1"/>
</dbReference>
<dbReference type="PROSITE" id="PS00729">
    <property type="entry name" value="AP_NUCLEASE_F2_1"/>
    <property type="match status" value="1"/>
</dbReference>
<dbReference type="PROSITE" id="PS00730">
    <property type="entry name" value="AP_NUCLEASE_F2_2"/>
    <property type="match status" value="1"/>
</dbReference>
<dbReference type="PROSITE" id="PS00731">
    <property type="entry name" value="AP_NUCLEASE_F2_3"/>
    <property type="match status" value="1"/>
</dbReference>
<dbReference type="PROSITE" id="PS51432">
    <property type="entry name" value="AP_NUCLEASE_F2_4"/>
    <property type="match status" value="1"/>
</dbReference>
<proteinExistence type="inferred from homology"/>
<accession>A9BJ15</accession>
<name>END4_PETMO</name>